<proteinExistence type="evidence at protein level"/>
<reference key="1">
    <citation type="journal article" date="1995" name="Genomics">
        <title>Human neuronal pentraxin II (NPTX2): conservation, genomic structure, and chromosomal localization.</title>
        <authorList>
            <person name="Hsu Y.-C."/>
            <person name="Perin M.S."/>
        </authorList>
    </citation>
    <scope>NUCLEOTIDE SEQUENCE [MRNA]</scope>
    <source>
        <tissue>Brain</tissue>
    </source>
</reference>
<reference key="2">
    <citation type="journal article" date="2003" name="Science">
        <title>Human chromosome 7: DNA sequence and biology.</title>
        <authorList>
            <person name="Scherer S.W."/>
            <person name="Cheung J."/>
            <person name="MacDonald J.R."/>
            <person name="Osborne L.R."/>
            <person name="Nakabayashi K."/>
            <person name="Herbrick J.-A."/>
            <person name="Carson A.R."/>
            <person name="Parker-Katiraee L."/>
            <person name="Skaug J."/>
            <person name="Khaja R."/>
            <person name="Zhang J."/>
            <person name="Hudek A.K."/>
            <person name="Li M."/>
            <person name="Haddad M."/>
            <person name="Duggan G.E."/>
            <person name="Fernandez B.A."/>
            <person name="Kanematsu E."/>
            <person name="Gentles S."/>
            <person name="Christopoulos C.C."/>
            <person name="Choufani S."/>
            <person name="Kwasnicka D."/>
            <person name="Zheng X.H."/>
            <person name="Lai Z."/>
            <person name="Nusskern D.R."/>
            <person name="Zhang Q."/>
            <person name="Gu Z."/>
            <person name="Lu F."/>
            <person name="Zeesman S."/>
            <person name="Nowaczyk M.J."/>
            <person name="Teshima I."/>
            <person name="Chitayat D."/>
            <person name="Shuman C."/>
            <person name="Weksberg R."/>
            <person name="Zackai E.H."/>
            <person name="Grebe T.A."/>
            <person name="Cox S.R."/>
            <person name="Kirkpatrick S.J."/>
            <person name="Rahman N."/>
            <person name="Friedman J.M."/>
            <person name="Heng H.H.Q."/>
            <person name="Pelicci P.G."/>
            <person name="Lo-Coco F."/>
            <person name="Belloni E."/>
            <person name="Shaffer L.G."/>
            <person name="Pober B."/>
            <person name="Morton C.C."/>
            <person name="Gusella J.F."/>
            <person name="Bruns G.A.P."/>
            <person name="Korf B.R."/>
            <person name="Quade B.J."/>
            <person name="Ligon A.H."/>
            <person name="Ferguson H."/>
            <person name="Higgins A.W."/>
            <person name="Leach N.T."/>
            <person name="Herrick S.R."/>
            <person name="Lemyre E."/>
            <person name="Farra C.G."/>
            <person name="Kim H.-G."/>
            <person name="Summers A.M."/>
            <person name="Gripp K.W."/>
            <person name="Roberts W."/>
            <person name="Szatmari P."/>
            <person name="Winsor E.J.T."/>
            <person name="Grzeschik K.-H."/>
            <person name="Teebi A."/>
            <person name="Minassian B.A."/>
            <person name="Kere J."/>
            <person name="Armengol L."/>
            <person name="Pujana M.A."/>
            <person name="Estivill X."/>
            <person name="Wilson M.D."/>
            <person name="Koop B.F."/>
            <person name="Tosi S."/>
            <person name="Moore G.E."/>
            <person name="Boright A.P."/>
            <person name="Zlotorynski E."/>
            <person name="Kerem B."/>
            <person name="Kroisel P.M."/>
            <person name="Petek E."/>
            <person name="Oscier D.G."/>
            <person name="Mould S.J."/>
            <person name="Doehner H."/>
            <person name="Doehner K."/>
            <person name="Rommens J.M."/>
            <person name="Vincent J.B."/>
            <person name="Venter J.C."/>
            <person name="Li P.W."/>
            <person name="Mural R.J."/>
            <person name="Adams M.D."/>
            <person name="Tsui L.-C."/>
        </authorList>
    </citation>
    <scope>NUCLEOTIDE SEQUENCE [LARGE SCALE GENOMIC DNA]</scope>
</reference>
<reference key="3">
    <citation type="submission" date="2005-09" db="EMBL/GenBank/DDBJ databases">
        <authorList>
            <person name="Mural R.J."/>
            <person name="Istrail S."/>
            <person name="Sutton G.G."/>
            <person name="Florea L."/>
            <person name="Halpern A.L."/>
            <person name="Mobarry C.M."/>
            <person name="Lippert R."/>
            <person name="Walenz B."/>
            <person name="Shatkay H."/>
            <person name="Dew I."/>
            <person name="Miller J.R."/>
            <person name="Flanigan M.J."/>
            <person name="Edwards N.J."/>
            <person name="Bolanos R."/>
            <person name="Fasulo D."/>
            <person name="Halldorsson B.V."/>
            <person name="Hannenhalli S."/>
            <person name="Turner R."/>
            <person name="Yooseph S."/>
            <person name="Lu F."/>
            <person name="Nusskern D.R."/>
            <person name="Shue B.C."/>
            <person name="Zheng X.H."/>
            <person name="Zhong F."/>
            <person name="Delcher A.L."/>
            <person name="Huson D.H."/>
            <person name="Kravitz S.A."/>
            <person name="Mouchard L."/>
            <person name="Reinert K."/>
            <person name="Remington K.A."/>
            <person name="Clark A.G."/>
            <person name="Waterman M.S."/>
            <person name="Eichler E.E."/>
            <person name="Adams M.D."/>
            <person name="Hunkapiller M.W."/>
            <person name="Myers E.W."/>
            <person name="Venter J.C."/>
        </authorList>
    </citation>
    <scope>NUCLEOTIDE SEQUENCE [LARGE SCALE GENOMIC DNA]</scope>
</reference>
<reference key="4">
    <citation type="journal article" date="2003" name="Nature">
        <title>The DNA sequence of human chromosome 7.</title>
        <authorList>
            <person name="Hillier L.W."/>
            <person name="Fulton R.S."/>
            <person name="Fulton L.A."/>
            <person name="Graves T.A."/>
            <person name="Pepin K.H."/>
            <person name="Wagner-McPherson C."/>
            <person name="Layman D."/>
            <person name="Maas J."/>
            <person name="Jaeger S."/>
            <person name="Walker R."/>
            <person name="Wylie K."/>
            <person name="Sekhon M."/>
            <person name="Becker M.C."/>
            <person name="O'Laughlin M.D."/>
            <person name="Schaller M.E."/>
            <person name="Fewell G.A."/>
            <person name="Delehaunty K.D."/>
            <person name="Miner T.L."/>
            <person name="Nash W.E."/>
            <person name="Cordes M."/>
            <person name="Du H."/>
            <person name="Sun H."/>
            <person name="Edwards J."/>
            <person name="Bradshaw-Cordum H."/>
            <person name="Ali J."/>
            <person name="Andrews S."/>
            <person name="Isak A."/>
            <person name="Vanbrunt A."/>
            <person name="Nguyen C."/>
            <person name="Du F."/>
            <person name="Lamar B."/>
            <person name="Courtney L."/>
            <person name="Kalicki J."/>
            <person name="Ozersky P."/>
            <person name="Bielicki L."/>
            <person name="Scott K."/>
            <person name="Holmes A."/>
            <person name="Harkins R."/>
            <person name="Harris A."/>
            <person name="Strong C.M."/>
            <person name="Hou S."/>
            <person name="Tomlinson C."/>
            <person name="Dauphin-Kohlberg S."/>
            <person name="Kozlowicz-Reilly A."/>
            <person name="Leonard S."/>
            <person name="Rohlfing T."/>
            <person name="Rock S.M."/>
            <person name="Tin-Wollam A.-M."/>
            <person name="Abbott A."/>
            <person name="Minx P."/>
            <person name="Maupin R."/>
            <person name="Strowmatt C."/>
            <person name="Latreille P."/>
            <person name="Miller N."/>
            <person name="Johnson D."/>
            <person name="Murray J."/>
            <person name="Woessner J.P."/>
            <person name="Wendl M.C."/>
            <person name="Yang S.-P."/>
            <person name="Schultz B.R."/>
            <person name="Wallis J.W."/>
            <person name="Spieth J."/>
            <person name="Bieri T.A."/>
            <person name="Nelson J.O."/>
            <person name="Berkowicz N."/>
            <person name="Wohldmann P.E."/>
            <person name="Cook L.L."/>
            <person name="Hickenbotham M.T."/>
            <person name="Eldred J."/>
            <person name="Williams D."/>
            <person name="Bedell J.A."/>
            <person name="Mardis E.R."/>
            <person name="Clifton S.W."/>
            <person name="Chissoe S.L."/>
            <person name="Marra M.A."/>
            <person name="Raymond C."/>
            <person name="Haugen E."/>
            <person name="Gillett W."/>
            <person name="Zhou Y."/>
            <person name="James R."/>
            <person name="Phelps K."/>
            <person name="Iadanoto S."/>
            <person name="Bubb K."/>
            <person name="Simms E."/>
            <person name="Levy R."/>
            <person name="Clendenning J."/>
            <person name="Kaul R."/>
            <person name="Kent W.J."/>
            <person name="Furey T.S."/>
            <person name="Baertsch R.A."/>
            <person name="Brent M.R."/>
            <person name="Keibler E."/>
            <person name="Flicek P."/>
            <person name="Bork P."/>
            <person name="Suyama M."/>
            <person name="Bailey J.A."/>
            <person name="Portnoy M.E."/>
            <person name="Torrents D."/>
            <person name="Chinwalla A.T."/>
            <person name="Gish W.R."/>
            <person name="Eddy S.R."/>
            <person name="McPherson J.D."/>
            <person name="Olson M.V."/>
            <person name="Eichler E.E."/>
            <person name="Green E.D."/>
            <person name="Waterston R.H."/>
            <person name="Wilson R.K."/>
        </authorList>
    </citation>
    <scope>NUCLEOTIDE SEQUENCE [LARGE SCALE GENOMIC DNA]</scope>
</reference>
<reference key="5">
    <citation type="journal article" date="2004" name="Genome Res.">
        <title>The status, quality, and expansion of the NIH full-length cDNA project: the Mammalian Gene Collection (MGC).</title>
        <authorList>
            <consortium name="The MGC Project Team"/>
        </authorList>
    </citation>
    <scope>NUCLEOTIDE SEQUENCE [LARGE SCALE MRNA]</scope>
    <source>
        <tissue>Brain</tissue>
    </source>
</reference>
<reference key="6">
    <citation type="journal article" date="2000" name="J. Biol. Chem.">
        <title>Biochemical interactions of the neuronal pentraxins. Neuronal pentraxin (NP) receptor binds to taipoxin and taipoxin-associated calcium-binding protein 49 via NP1 and NP2.</title>
        <authorList>
            <person name="Kirkpatrick L.L."/>
            <person name="Matzuk M.M."/>
            <person name="Dodds D.C."/>
            <person name="Perin M.S."/>
        </authorList>
    </citation>
    <scope>SUBUNIT</scope>
</reference>
<evidence type="ECO:0000250" key="1"/>
<evidence type="ECO:0000255" key="2"/>
<evidence type="ECO:0000255" key="3">
    <source>
        <dbReference type="PROSITE-ProRule" id="PRU01172"/>
    </source>
</evidence>
<evidence type="ECO:0000269" key="4">
    <source>
    </source>
</evidence>
<evidence type="ECO:0000305" key="5"/>
<sequence length="431" mass="47042">MLALLAASVALAVAAGAQDSPAPGSRFVCTALPPEAVHAGCPLPAMPMQGGAQSPEEELRAAVLQLRETVVQQKETLGAQREAIRELTGKLARCEGLAGGKARGAGATGKDTMGDLPRDPGHVVEQLSRSLQTLKDRLESLEHQLRANVSNAGLPGDFREVLQQRLGELERQLLRKVAELEDEKSLLHNETSAHRQKTESTLNALLQRVTELERGNSAFKSPDAFKVSLPLRTNYLYGKIKKTLPELYAFTICLWLRSSASPGIGTPFSYAVPGQANEIVLIEWGNNPIELLINDKVAQLPLFVSDGKWHHICVTWTTRDGMWEAFQDGEKLGTGENLAPWHPIKPGGVLILGQEQDTVGGRFDATQAFVGELSQFNIWDRVLRAQEIVNIANCSTNMPGNIIPWVDNNVDVFGGASKWPVETCEERLLDL</sequence>
<keyword id="KW-0106">Calcium</keyword>
<keyword id="KW-1015">Disulfide bond</keyword>
<keyword id="KW-0325">Glycoprotein</keyword>
<keyword id="KW-0430">Lectin</keyword>
<keyword id="KW-0479">Metal-binding</keyword>
<keyword id="KW-1267">Proteomics identification</keyword>
<keyword id="KW-1185">Reference proteome</keyword>
<keyword id="KW-0964">Secreted</keyword>
<keyword id="KW-0732">Signal</keyword>
<accession>P47972</accession>
<accession>A4D267</accession>
<accession>Q86XV7</accession>
<accession>Q96G70</accession>
<protein>
    <recommendedName>
        <fullName>Neuronal pentraxin-2</fullName>
        <shortName>NP2</shortName>
    </recommendedName>
    <alternativeName>
        <fullName>Neuronal pentraxin II</fullName>
        <shortName>NP-II</shortName>
    </alternativeName>
</protein>
<dbReference type="EMBL" id="U29195">
    <property type="protein sequence ID" value="AAA68980.2"/>
    <property type="molecule type" value="Genomic_DNA"/>
</dbReference>
<dbReference type="EMBL" id="U29191">
    <property type="protein sequence ID" value="AAA68980.2"/>
    <property type="status" value="JOINED"/>
    <property type="molecule type" value="Genomic_DNA"/>
</dbReference>
<dbReference type="EMBL" id="U29192">
    <property type="protein sequence ID" value="AAA68980.2"/>
    <property type="status" value="JOINED"/>
    <property type="molecule type" value="Genomic_DNA"/>
</dbReference>
<dbReference type="EMBL" id="U29193">
    <property type="protein sequence ID" value="AAA68980.2"/>
    <property type="status" value="JOINED"/>
    <property type="molecule type" value="Genomic_DNA"/>
</dbReference>
<dbReference type="EMBL" id="U29194">
    <property type="protein sequence ID" value="AAA68980.2"/>
    <property type="status" value="JOINED"/>
    <property type="molecule type" value="Genomic_DNA"/>
</dbReference>
<dbReference type="EMBL" id="U26662">
    <property type="protein sequence ID" value="AAA92296.1"/>
    <property type="molecule type" value="mRNA"/>
</dbReference>
<dbReference type="EMBL" id="AC074121">
    <property type="protein sequence ID" value="AAQ93363.1"/>
    <property type="molecule type" value="Genomic_DNA"/>
</dbReference>
<dbReference type="EMBL" id="CH236956">
    <property type="protein sequence ID" value="EAL23889.1"/>
    <property type="molecule type" value="Genomic_DNA"/>
</dbReference>
<dbReference type="EMBL" id="CH471091">
    <property type="protein sequence ID" value="EAW76705.1"/>
    <property type="molecule type" value="Genomic_DNA"/>
</dbReference>
<dbReference type="EMBL" id="BC009924">
    <property type="protein sequence ID" value="AAH09924.1"/>
    <property type="molecule type" value="mRNA"/>
</dbReference>
<dbReference type="EMBL" id="BC034781">
    <property type="protein sequence ID" value="AAH34781.1"/>
    <property type="molecule type" value="mRNA"/>
</dbReference>
<dbReference type="EMBL" id="BC035339">
    <property type="protein sequence ID" value="AAH35339.1"/>
    <property type="molecule type" value="mRNA"/>
</dbReference>
<dbReference type="EMBL" id="BC048275">
    <property type="protein sequence ID" value="AAH48275.2"/>
    <property type="molecule type" value="mRNA"/>
</dbReference>
<dbReference type="CCDS" id="CCDS5657.1"/>
<dbReference type="RefSeq" id="NP_002514.1">
    <property type="nucleotide sequence ID" value="NM_002523.3"/>
</dbReference>
<dbReference type="SMR" id="P47972"/>
<dbReference type="BioGRID" id="110945">
    <property type="interactions" value="23"/>
</dbReference>
<dbReference type="FunCoup" id="P47972">
    <property type="interactions" value="146"/>
</dbReference>
<dbReference type="IntAct" id="P47972">
    <property type="interactions" value="19"/>
</dbReference>
<dbReference type="STRING" id="9606.ENSP00000265634"/>
<dbReference type="GlyCosmos" id="P47972">
    <property type="glycosylation" value="3 sites, No reported glycans"/>
</dbReference>
<dbReference type="GlyGen" id="P47972">
    <property type="glycosylation" value="3 sites, 4 N-linked glycans (2 sites)"/>
</dbReference>
<dbReference type="iPTMnet" id="P47972"/>
<dbReference type="PhosphoSitePlus" id="P47972"/>
<dbReference type="BioMuta" id="NPTX2"/>
<dbReference type="DMDM" id="20981708"/>
<dbReference type="jPOST" id="P47972"/>
<dbReference type="MassIVE" id="P47972"/>
<dbReference type="PaxDb" id="9606-ENSP00000265634"/>
<dbReference type="PeptideAtlas" id="P47972"/>
<dbReference type="ProteomicsDB" id="55826"/>
<dbReference type="Antibodypedia" id="30245">
    <property type="antibodies" value="223 antibodies from 34 providers"/>
</dbReference>
<dbReference type="DNASU" id="4885"/>
<dbReference type="Ensembl" id="ENST00000265634.4">
    <property type="protein sequence ID" value="ENSP00000265634.3"/>
    <property type="gene ID" value="ENSG00000106236.4"/>
</dbReference>
<dbReference type="GeneID" id="4885"/>
<dbReference type="KEGG" id="hsa:4885"/>
<dbReference type="MANE-Select" id="ENST00000265634.4">
    <property type="protein sequence ID" value="ENSP00000265634.3"/>
    <property type="RefSeq nucleotide sequence ID" value="NM_002523.3"/>
    <property type="RefSeq protein sequence ID" value="NP_002514.1"/>
</dbReference>
<dbReference type="UCSC" id="uc003upl.3">
    <property type="organism name" value="human"/>
</dbReference>
<dbReference type="AGR" id="HGNC:7953"/>
<dbReference type="CTD" id="4885"/>
<dbReference type="DisGeNET" id="4885"/>
<dbReference type="GeneCards" id="NPTX2"/>
<dbReference type="HGNC" id="HGNC:7953">
    <property type="gene designation" value="NPTX2"/>
</dbReference>
<dbReference type="HPA" id="ENSG00000106236">
    <property type="expression patterns" value="Tissue enriched (pituitary)"/>
</dbReference>
<dbReference type="MIM" id="600750">
    <property type="type" value="gene"/>
</dbReference>
<dbReference type="neXtProt" id="NX_P47972"/>
<dbReference type="OpenTargets" id="ENSG00000106236"/>
<dbReference type="PharmGKB" id="PA31739"/>
<dbReference type="VEuPathDB" id="HostDB:ENSG00000106236"/>
<dbReference type="eggNOG" id="ENOG502QV29">
    <property type="taxonomic scope" value="Eukaryota"/>
</dbReference>
<dbReference type="GeneTree" id="ENSGT01060000248591"/>
<dbReference type="HOGENOM" id="CLU_032051_0_0_1"/>
<dbReference type="InParanoid" id="P47972"/>
<dbReference type="OMA" id="AWKNEVG"/>
<dbReference type="OrthoDB" id="8871962at2759"/>
<dbReference type="PAN-GO" id="P47972">
    <property type="GO annotations" value="0 GO annotations based on evolutionary models"/>
</dbReference>
<dbReference type="PhylomeDB" id="P47972"/>
<dbReference type="TreeFam" id="TF330208"/>
<dbReference type="PathwayCommons" id="P47972"/>
<dbReference type="SignaLink" id="P47972"/>
<dbReference type="BioGRID-ORCS" id="4885">
    <property type="hits" value="11 hits in 1152 CRISPR screens"/>
</dbReference>
<dbReference type="GeneWiki" id="NPTX2"/>
<dbReference type="GenomeRNAi" id="4885"/>
<dbReference type="Pharos" id="P47972">
    <property type="development level" value="Tbio"/>
</dbReference>
<dbReference type="PRO" id="PR:P47972"/>
<dbReference type="Proteomes" id="UP000005640">
    <property type="component" value="Chromosome 7"/>
</dbReference>
<dbReference type="RNAct" id="P47972">
    <property type="molecule type" value="protein"/>
</dbReference>
<dbReference type="Bgee" id="ENSG00000106236">
    <property type="expression patterns" value="Expressed in type B pancreatic cell and 141 other cell types or tissues"/>
</dbReference>
<dbReference type="GO" id="GO:0005576">
    <property type="term" value="C:extracellular region"/>
    <property type="evidence" value="ECO:0007669"/>
    <property type="project" value="UniProtKB-SubCell"/>
</dbReference>
<dbReference type="GO" id="GO:0098978">
    <property type="term" value="C:glutamatergic synapse"/>
    <property type="evidence" value="ECO:0000314"/>
    <property type="project" value="SynGO"/>
</dbReference>
<dbReference type="GO" id="GO:0098793">
    <property type="term" value="C:presynapse"/>
    <property type="evidence" value="ECO:0007669"/>
    <property type="project" value="Ensembl"/>
</dbReference>
<dbReference type="GO" id="GO:0030246">
    <property type="term" value="F:carbohydrate binding"/>
    <property type="evidence" value="ECO:0007669"/>
    <property type="project" value="UniProtKB-KW"/>
</dbReference>
<dbReference type="GO" id="GO:0046872">
    <property type="term" value="F:metal ion binding"/>
    <property type="evidence" value="ECO:0007669"/>
    <property type="project" value="UniProtKB-KW"/>
</dbReference>
<dbReference type="GO" id="GO:0008306">
    <property type="term" value="P:associative learning"/>
    <property type="evidence" value="ECO:0007669"/>
    <property type="project" value="Ensembl"/>
</dbReference>
<dbReference type="GO" id="GO:0007268">
    <property type="term" value="P:chemical synaptic transmission"/>
    <property type="evidence" value="ECO:0000303"/>
    <property type="project" value="UniProtKB"/>
</dbReference>
<dbReference type="CDD" id="cd00152">
    <property type="entry name" value="PTX"/>
    <property type="match status" value="1"/>
</dbReference>
<dbReference type="FunFam" id="2.60.120.200:FF:000012">
    <property type="entry name" value="neuronal pentraxin receptor"/>
    <property type="match status" value="1"/>
</dbReference>
<dbReference type="Gene3D" id="2.60.120.200">
    <property type="match status" value="1"/>
</dbReference>
<dbReference type="InterPro" id="IPR013320">
    <property type="entry name" value="ConA-like_dom_sf"/>
</dbReference>
<dbReference type="InterPro" id="IPR051360">
    <property type="entry name" value="Neuronal_Pentraxin_Related"/>
</dbReference>
<dbReference type="InterPro" id="IPR030476">
    <property type="entry name" value="Pentaxin_CS"/>
</dbReference>
<dbReference type="InterPro" id="IPR001759">
    <property type="entry name" value="Pentraxin-related"/>
</dbReference>
<dbReference type="PANTHER" id="PTHR19277:SF1">
    <property type="entry name" value="NEURONAL PENTRAXIN-2"/>
    <property type="match status" value="1"/>
</dbReference>
<dbReference type="PANTHER" id="PTHR19277">
    <property type="entry name" value="PENTRAXIN"/>
    <property type="match status" value="1"/>
</dbReference>
<dbReference type="Pfam" id="PF00354">
    <property type="entry name" value="Pentaxin"/>
    <property type="match status" value="1"/>
</dbReference>
<dbReference type="PRINTS" id="PR00895">
    <property type="entry name" value="PENTAXIN"/>
</dbReference>
<dbReference type="SMART" id="SM00159">
    <property type="entry name" value="PTX"/>
    <property type="match status" value="1"/>
</dbReference>
<dbReference type="SUPFAM" id="SSF49899">
    <property type="entry name" value="Concanavalin A-like lectins/glucanases"/>
    <property type="match status" value="1"/>
</dbReference>
<dbReference type="PROSITE" id="PS00289">
    <property type="entry name" value="PTX_1"/>
    <property type="match status" value="1"/>
</dbReference>
<dbReference type="PROSITE" id="PS51828">
    <property type="entry name" value="PTX_2"/>
    <property type="match status" value="1"/>
</dbReference>
<organism>
    <name type="scientific">Homo sapiens</name>
    <name type="common">Human</name>
    <dbReference type="NCBI Taxonomy" id="9606"/>
    <lineage>
        <taxon>Eukaryota</taxon>
        <taxon>Metazoa</taxon>
        <taxon>Chordata</taxon>
        <taxon>Craniata</taxon>
        <taxon>Vertebrata</taxon>
        <taxon>Euteleostomi</taxon>
        <taxon>Mammalia</taxon>
        <taxon>Eutheria</taxon>
        <taxon>Euarchontoglires</taxon>
        <taxon>Primates</taxon>
        <taxon>Haplorrhini</taxon>
        <taxon>Catarrhini</taxon>
        <taxon>Hominidae</taxon>
        <taxon>Homo</taxon>
    </lineage>
</organism>
<name>NPTX2_HUMAN</name>
<gene>
    <name type="primary">NPTX2</name>
</gene>
<comment type="function">
    <text evidence="1">Likely to play role in the modification of cellular properties that underlie long-term plasticity. Binds to agar matrix in a calcium-dependent manner (By similarity).</text>
</comment>
<comment type="cofactor">
    <cofactor evidence="1">
        <name>Ca(2+)</name>
        <dbReference type="ChEBI" id="CHEBI:29108"/>
    </cofactor>
    <text evidence="1">Binds 2 calcium ions per subunit.</text>
</comment>
<comment type="subunit">
    <text evidence="4">Homooligomer or heterooligomer (probably pentamer) with neuronal pentraxin receptor (NPTXR).</text>
</comment>
<comment type="interaction">
    <interactant intactId="EBI-3957229">
        <id>P47972</id>
    </interactant>
    <interactant intactId="EBI-8754490">
        <id>O60353</id>
        <label>FZD6</label>
    </interactant>
    <organismsDiffer>false</organismsDiffer>
    <experiments>9</experiments>
</comment>
<comment type="subcellular location">
    <subcellularLocation>
        <location evidence="1">Secreted</location>
    </subcellularLocation>
</comment>
<comment type="tissue specificity">
    <text>Brain, pancreas, liver, heart and skeletal muscle. Highest levels are seen in the testis.</text>
</comment>
<feature type="signal peptide" evidence="2">
    <location>
        <begin position="1"/>
        <end position="15"/>
    </location>
</feature>
<feature type="chain" id="PRO_0000023551" description="Neuronal pentraxin-2">
    <location>
        <begin position="16"/>
        <end position="431"/>
    </location>
</feature>
<feature type="domain" description="Pentraxin (PTX)" evidence="3">
    <location>
        <begin position="223"/>
        <end position="424"/>
    </location>
</feature>
<feature type="binding site" evidence="1">
    <location>
        <position position="277"/>
    </location>
    <ligand>
        <name>Ca(2+)</name>
        <dbReference type="ChEBI" id="CHEBI:29108"/>
        <label>1</label>
    </ligand>
</feature>
<feature type="binding site" evidence="1">
    <location>
        <position position="355"/>
    </location>
    <ligand>
        <name>Ca(2+)</name>
        <dbReference type="ChEBI" id="CHEBI:29108"/>
        <label>1</label>
    </ligand>
</feature>
<feature type="binding site" evidence="3">
    <location>
        <position position="355"/>
    </location>
    <ligand>
        <name>Ca(2+)</name>
        <dbReference type="ChEBI" id="CHEBI:29108"/>
        <label>2</label>
    </ligand>
</feature>
<feature type="binding site" evidence="1">
    <location>
        <position position="356"/>
    </location>
    <ligand>
        <name>Ca(2+)</name>
        <dbReference type="ChEBI" id="CHEBI:29108"/>
        <label>1</label>
    </ligand>
</feature>
<feature type="binding site" evidence="1">
    <location>
        <position position="357"/>
    </location>
    <ligand>
        <name>Ca(2+)</name>
        <dbReference type="ChEBI" id="CHEBI:29108"/>
        <label>1</label>
    </ligand>
</feature>
<feature type="binding site" evidence="3">
    <location>
        <position position="357"/>
    </location>
    <ligand>
        <name>Ca(2+)</name>
        <dbReference type="ChEBI" id="CHEBI:29108"/>
        <label>2</label>
    </ligand>
</feature>
<feature type="binding site" evidence="3">
    <location>
        <position position="367"/>
    </location>
    <ligand>
        <name>Ca(2+)</name>
        <dbReference type="ChEBI" id="CHEBI:29108"/>
        <label>2</label>
    </ligand>
</feature>
<feature type="glycosylation site" description="N-linked (GlcNAc...) asparagine" evidence="2">
    <location>
        <position position="148"/>
    </location>
</feature>
<feature type="glycosylation site" description="N-linked (GlcNAc...) asparagine" evidence="2">
    <location>
        <position position="189"/>
    </location>
</feature>
<feature type="glycosylation site" description="N-linked (GlcNAc...) asparagine" evidence="2">
    <location>
        <position position="393"/>
    </location>
</feature>
<feature type="disulfide bond" evidence="3">
    <location>
        <begin position="253"/>
        <end position="313"/>
    </location>
</feature>
<feature type="sequence conflict" description="In Ref. 1; AAA68980/AAA92296." evidence="5" ref="1">
    <original>GAQRE</original>
    <variation>ASAR</variation>
    <location>
        <begin position="78"/>
        <end position="82"/>
    </location>
</feature>
<feature type="sequence conflict" description="In Ref. 1; AAA68980/AAA92296." evidence="5" ref="1">
    <original>V</original>
    <variation>L</variation>
    <location>
        <position position="280"/>
    </location>
</feature>
<feature type="sequence conflict" description="In Ref. 1; AAA68980/AAA92296." evidence="5" ref="1">
    <original>R</original>
    <variation>A</variation>
    <location>
        <position position="427"/>
    </location>
</feature>